<dbReference type="EC" id="7.1.1.-" evidence="1"/>
<dbReference type="EMBL" id="CP000124">
    <property type="protein sequence ID" value="ABA47975.1"/>
    <property type="molecule type" value="Genomic_DNA"/>
</dbReference>
<dbReference type="RefSeq" id="WP_004186558.1">
    <property type="nucleotide sequence ID" value="NC_007434.1"/>
</dbReference>
<dbReference type="SMR" id="Q3JUA1"/>
<dbReference type="EnsemblBacteria" id="ABA47975">
    <property type="protein sequence ID" value="ABA47975"/>
    <property type="gene ID" value="BURPS1710b_1443"/>
</dbReference>
<dbReference type="GeneID" id="93059702"/>
<dbReference type="KEGG" id="bpm:BURPS1710b_1443"/>
<dbReference type="HOGENOM" id="CLU_067218_5_1_4"/>
<dbReference type="Proteomes" id="UP000002700">
    <property type="component" value="Chromosome I"/>
</dbReference>
<dbReference type="GO" id="GO:0005886">
    <property type="term" value="C:plasma membrane"/>
    <property type="evidence" value="ECO:0007669"/>
    <property type="project" value="UniProtKB-SubCell"/>
</dbReference>
<dbReference type="GO" id="GO:0051539">
    <property type="term" value="F:4 iron, 4 sulfur cluster binding"/>
    <property type="evidence" value="ECO:0007669"/>
    <property type="project" value="UniProtKB-KW"/>
</dbReference>
<dbReference type="GO" id="GO:0005506">
    <property type="term" value="F:iron ion binding"/>
    <property type="evidence" value="ECO:0007669"/>
    <property type="project" value="UniProtKB-UniRule"/>
</dbReference>
<dbReference type="GO" id="GO:0050136">
    <property type="term" value="F:NADH:ubiquinone reductase (non-electrogenic) activity"/>
    <property type="evidence" value="ECO:0007669"/>
    <property type="project" value="UniProtKB-UniRule"/>
</dbReference>
<dbReference type="GO" id="GO:0048038">
    <property type="term" value="F:quinone binding"/>
    <property type="evidence" value="ECO:0007669"/>
    <property type="project" value="UniProtKB-KW"/>
</dbReference>
<dbReference type="GO" id="GO:0009060">
    <property type="term" value="P:aerobic respiration"/>
    <property type="evidence" value="ECO:0007669"/>
    <property type="project" value="TreeGrafter"/>
</dbReference>
<dbReference type="FunFam" id="3.30.70.3270:FF:000003">
    <property type="entry name" value="NADH-quinone oxidoreductase subunit I"/>
    <property type="match status" value="1"/>
</dbReference>
<dbReference type="Gene3D" id="3.30.70.3270">
    <property type="match status" value="1"/>
</dbReference>
<dbReference type="HAMAP" id="MF_01351">
    <property type="entry name" value="NDH1_NuoI"/>
    <property type="match status" value="1"/>
</dbReference>
<dbReference type="InterPro" id="IPR017896">
    <property type="entry name" value="4Fe4S_Fe-S-bd"/>
</dbReference>
<dbReference type="InterPro" id="IPR017900">
    <property type="entry name" value="4Fe4S_Fe_S_CS"/>
</dbReference>
<dbReference type="InterPro" id="IPR010226">
    <property type="entry name" value="NADH_quinone_OxRdtase_chainI"/>
</dbReference>
<dbReference type="NCBIfam" id="TIGR01971">
    <property type="entry name" value="NuoI"/>
    <property type="match status" value="1"/>
</dbReference>
<dbReference type="NCBIfam" id="NF004538">
    <property type="entry name" value="PRK05888.1-4"/>
    <property type="match status" value="1"/>
</dbReference>
<dbReference type="NCBIfam" id="NF004539">
    <property type="entry name" value="PRK05888.1-5"/>
    <property type="match status" value="1"/>
</dbReference>
<dbReference type="PANTHER" id="PTHR10849:SF20">
    <property type="entry name" value="NADH DEHYDROGENASE [UBIQUINONE] IRON-SULFUR PROTEIN 8, MITOCHONDRIAL"/>
    <property type="match status" value="1"/>
</dbReference>
<dbReference type="PANTHER" id="PTHR10849">
    <property type="entry name" value="NADH DEHYDROGENASE UBIQUINONE IRON-SULFUR PROTEIN 8, MITOCHONDRIAL"/>
    <property type="match status" value="1"/>
</dbReference>
<dbReference type="Pfam" id="PF12838">
    <property type="entry name" value="Fer4_7"/>
    <property type="match status" value="1"/>
</dbReference>
<dbReference type="SUPFAM" id="SSF54862">
    <property type="entry name" value="4Fe-4S ferredoxins"/>
    <property type="match status" value="1"/>
</dbReference>
<dbReference type="PROSITE" id="PS00198">
    <property type="entry name" value="4FE4S_FER_1"/>
    <property type="match status" value="2"/>
</dbReference>
<dbReference type="PROSITE" id="PS51379">
    <property type="entry name" value="4FE4S_FER_2"/>
    <property type="match status" value="2"/>
</dbReference>
<comment type="function">
    <text evidence="1">NDH-1 shuttles electrons from NADH, via FMN and iron-sulfur (Fe-S) centers, to quinones in the respiratory chain. The immediate electron acceptor for the enzyme in this species is believed to be ubiquinone. Couples the redox reaction to proton translocation (for every two electrons transferred, four hydrogen ions are translocated across the cytoplasmic membrane), and thus conserves the redox energy in a proton gradient.</text>
</comment>
<comment type="catalytic activity">
    <reaction evidence="1">
        <text>a quinone + NADH + 5 H(+)(in) = a quinol + NAD(+) + 4 H(+)(out)</text>
        <dbReference type="Rhea" id="RHEA:57888"/>
        <dbReference type="ChEBI" id="CHEBI:15378"/>
        <dbReference type="ChEBI" id="CHEBI:24646"/>
        <dbReference type="ChEBI" id="CHEBI:57540"/>
        <dbReference type="ChEBI" id="CHEBI:57945"/>
        <dbReference type="ChEBI" id="CHEBI:132124"/>
    </reaction>
</comment>
<comment type="cofactor">
    <cofactor evidence="1">
        <name>[4Fe-4S] cluster</name>
        <dbReference type="ChEBI" id="CHEBI:49883"/>
    </cofactor>
    <text evidence="1">Binds 2 [4Fe-4S] clusters per subunit.</text>
</comment>
<comment type="subunit">
    <text evidence="1">NDH-1 is composed of 14 different subunits. Subunits NuoA, H, J, K, L, M, N constitute the membrane sector of the complex.</text>
</comment>
<comment type="subcellular location">
    <subcellularLocation>
        <location evidence="1">Cell inner membrane</location>
        <topology evidence="1">Peripheral membrane protein</topology>
    </subcellularLocation>
</comment>
<comment type="similarity">
    <text evidence="1">Belongs to the complex I 23 kDa subunit family.</text>
</comment>
<gene>
    <name evidence="1" type="primary">nuoI</name>
    <name type="ordered locus">BURPS1710b_1443</name>
</gene>
<proteinExistence type="inferred from homology"/>
<organism>
    <name type="scientific">Burkholderia pseudomallei (strain 1710b)</name>
    <dbReference type="NCBI Taxonomy" id="320372"/>
    <lineage>
        <taxon>Bacteria</taxon>
        <taxon>Pseudomonadati</taxon>
        <taxon>Pseudomonadota</taxon>
        <taxon>Betaproteobacteria</taxon>
        <taxon>Burkholderiales</taxon>
        <taxon>Burkholderiaceae</taxon>
        <taxon>Burkholderia</taxon>
        <taxon>pseudomallei group</taxon>
    </lineage>
</organism>
<name>NUOI_BURP1</name>
<evidence type="ECO:0000255" key="1">
    <source>
        <dbReference type="HAMAP-Rule" id="MF_01351"/>
    </source>
</evidence>
<keyword id="KW-0004">4Fe-4S</keyword>
<keyword id="KW-0997">Cell inner membrane</keyword>
<keyword id="KW-1003">Cell membrane</keyword>
<keyword id="KW-0408">Iron</keyword>
<keyword id="KW-0411">Iron-sulfur</keyword>
<keyword id="KW-0472">Membrane</keyword>
<keyword id="KW-0479">Metal-binding</keyword>
<keyword id="KW-0520">NAD</keyword>
<keyword id="KW-0874">Quinone</keyword>
<keyword id="KW-0677">Repeat</keyword>
<keyword id="KW-1278">Translocase</keyword>
<keyword id="KW-0830">Ubiquinone</keyword>
<accession>Q3JUA1</accession>
<protein>
    <recommendedName>
        <fullName evidence="1">NADH-quinone oxidoreductase subunit I</fullName>
        <ecNumber evidence="1">7.1.1.-</ecNumber>
    </recommendedName>
    <alternativeName>
        <fullName evidence="1">NADH dehydrogenase I subunit I</fullName>
    </alternativeName>
    <alternativeName>
        <fullName evidence="1">NDH-1 subunit I</fullName>
    </alternativeName>
</protein>
<feature type="chain" id="PRO_0000250890" description="NADH-quinone oxidoreductase subunit I">
    <location>
        <begin position="1"/>
        <end position="162"/>
    </location>
</feature>
<feature type="domain" description="4Fe-4S ferredoxin-type 1" evidence="1">
    <location>
        <begin position="54"/>
        <end position="83"/>
    </location>
</feature>
<feature type="domain" description="4Fe-4S ferredoxin-type 2" evidence="1">
    <location>
        <begin position="93"/>
        <end position="122"/>
    </location>
</feature>
<feature type="binding site" evidence="1">
    <location>
        <position position="63"/>
    </location>
    <ligand>
        <name>[4Fe-4S] cluster</name>
        <dbReference type="ChEBI" id="CHEBI:49883"/>
        <label>1</label>
    </ligand>
</feature>
<feature type="binding site" evidence="1">
    <location>
        <position position="66"/>
    </location>
    <ligand>
        <name>[4Fe-4S] cluster</name>
        <dbReference type="ChEBI" id="CHEBI:49883"/>
        <label>1</label>
    </ligand>
</feature>
<feature type="binding site" evidence="1">
    <location>
        <position position="69"/>
    </location>
    <ligand>
        <name>[4Fe-4S] cluster</name>
        <dbReference type="ChEBI" id="CHEBI:49883"/>
        <label>1</label>
    </ligand>
</feature>
<feature type="binding site" evidence="1">
    <location>
        <position position="73"/>
    </location>
    <ligand>
        <name>[4Fe-4S] cluster</name>
        <dbReference type="ChEBI" id="CHEBI:49883"/>
        <label>2</label>
    </ligand>
</feature>
<feature type="binding site" evidence="1">
    <location>
        <position position="102"/>
    </location>
    <ligand>
        <name>[4Fe-4S] cluster</name>
        <dbReference type="ChEBI" id="CHEBI:49883"/>
        <label>2</label>
    </ligand>
</feature>
<feature type="binding site" evidence="1">
    <location>
        <position position="105"/>
    </location>
    <ligand>
        <name>[4Fe-4S] cluster</name>
        <dbReference type="ChEBI" id="CHEBI:49883"/>
        <label>2</label>
    </ligand>
</feature>
<feature type="binding site" evidence="1">
    <location>
        <position position="108"/>
    </location>
    <ligand>
        <name>[4Fe-4S] cluster</name>
        <dbReference type="ChEBI" id="CHEBI:49883"/>
        <label>2</label>
    </ligand>
</feature>
<feature type="binding site" evidence="1">
    <location>
        <position position="112"/>
    </location>
    <ligand>
        <name>[4Fe-4S] cluster</name>
        <dbReference type="ChEBI" id="CHEBI:49883"/>
        <label>1</label>
    </ligand>
</feature>
<reference key="1">
    <citation type="journal article" date="2010" name="Genome Biol. Evol.">
        <title>Continuing evolution of Burkholderia mallei through genome reduction and large-scale rearrangements.</title>
        <authorList>
            <person name="Losada L."/>
            <person name="Ronning C.M."/>
            <person name="DeShazer D."/>
            <person name="Woods D."/>
            <person name="Fedorova N."/>
            <person name="Kim H.S."/>
            <person name="Shabalina S.A."/>
            <person name="Pearson T.R."/>
            <person name="Brinkac L."/>
            <person name="Tan P."/>
            <person name="Nandi T."/>
            <person name="Crabtree J."/>
            <person name="Badger J."/>
            <person name="Beckstrom-Sternberg S."/>
            <person name="Saqib M."/>
            <person name="Schutzer S.E."/>
            <person name="Keim P."/>
            <person name="Nierman W.C."/>
        </authorList>
    </citation>
    <scope>NUCLEOTIDE SEQUENCE [LARGE SCALE GENOMIC DNA]</scope>
    <source>
        <strain>1710b</strain>
    </source>
</reference>
<sequence>MTAIQQFFKTFFLTELLKGLALTGRYTFKRKFTVQFPEEKTPISPRFRGLHALRRYENGEERCIACKLCEAVCPALAITIESETRADNTRRTTRYDIDLTKCIFCGFCEESCPVDSIVETQILEYHGEKRGDLYFTKDMLLAVGDRYEKEIAAAKAADARYR</sequence>